<organism>
    <name type="scientific">Arabidopsis thaliana</name>
    <name type="common">Mouse-ear cress</name>
    <dbReference type="NCBI Taxonomy" id="3702"/>
    <lineage>
        <taxon>Eukaryota</taxon>
        <taxon>Viridiplantae</taxon>
        <taxon>Streptophyta</taxon>
        <taxon>Embryophyta</taxon>
        <taxon>Tracheophyta</taxon>
        <taxon>Spermatophyta</taxon>
        <taxon>Magnoliopsida</taxon>
        <taxon>eudicotyledons</taxon>
        <taxon>Gunneridae</taxon>
        <taxon>Pentapetalae</taxon>
        <taxon>rosids</taxon>
        <taxon>malvids</taxon>
        <taxon>Brassicales</taxon>
        <taxon>Brassicaceae</taxon>
        <taxon>Camelineae</taxon>
        <taxon>Arabidopsis</taxon>
    </lineage>
</organism>
<evidence type="ECO:0000255" key="1"/>
<evidence type="ECO:0000255" key="2">
    <source>
        <dbReference type="PROSITE-ProRule" id="PRU00159"/>
    </source>
</evidence>
<evidence type="ECO:0000256" key="3">
    <source>
        <dbReference type="SAM" id="MobiDB-lite"/>
    </source>
</evidence>
<evidence type="ECO:0000269" key="4">
    <source>
    </source>
</evidence>
<evidence type="ECO:0000305" key="5"/>
<evidence type="ECO:0007744" key="6">
    <source>
    </source>
</evidence>
<evidence type="ECO:0007744" key="7">
    <source>
    </source>
</evidence>
<evidence type="ECO:0007744" key="8">
    <source>
    </source>
</evidence>
<keyword id="KW-0025">Alternative splicing</keyword>
<keyword id="KW-0067">ATP-binding</keyword>
<keyword id="KW-0433">Leucine-rich repeat</keyword>
<keyword id="KW-0472">Membrane</keyword>
<keyword id="KW-0547">Nucleotide-binding</keyword>
<keyword id="KW-0597">Phosphoprotein</keyword>
<keyword id="KW-0675">Receptor</keyword>
<keyword id="KW-1185">Reference proteome</keyword>
<keyword id="KW-0677">Repeat</keyword>
<keyword id="KW-0732">Signal</keyword>
<keyword id="KW-0812">Transmembrane</keyword>
<keyword id="KW-1133">Transmembrane helix</keyword>
<reference key="1">
    <citation type="journal article" date="2007" name="BMC Plant Biol.">
        <title>Molecular characterisation of the STRUBBELIG-RECEPTOR FAMILY of genes encoding putative leucine-rich repeat receptor-like kinases in Arabidopsis thaliana.</title>
        <authorList>
            <person name="Eyueboglu B."/>
            <person name="Pfister K."/>
            <person name="Haberer G."/>
            <person name="Chevalier D."/>
            <person name="Fuchs A."/>
            <person name="Mayer K.F.X."/>
            <person name="Schneitz K."/>
        </authorList>
    </citation>
    <scope>NUCLEOTIDE SEQUENCE [MRNA]</scope>
    <scope>FUNCTION</scope>
    <scope>DISRUPTION PHENOTYPE</scope>
    <scope>TISSUE SPECIFICITY</scope>
    <source>
        <strain>cv. Columbia</strain>
    </source>
</reference>
<reference key="2">
    <citation type="journal article" date="2000" name="Nature">
        <title>Sequence and analysis of chromosome 1 of the plant Arabidopsis thaliana.</title>
        <authorList>
            <person name="Theologis A."/>
            <person name="Ecker J.R."/>
            <person name="Palm C.J."/>
            <person name="Federspiel N.A."/>
            <person name="Kaul S."/>
            <person name="White O."/>
            <person name="Alonso J."/>
            <person name="Altafi H."/>
            <person name="Araujo R."/>
            <person name="Bowman C.L."/>
            <person name="Brooks S.Y."/>
            <person name="Buehler E."/>
            <person name="Chan A."/>
            <person name="Chao Q."/>
            <person name="Chen H."/>
            <person name="Cheuk R.F."/>
            <person name="Chin C.W."/>
            <person name="Chung M.K."/>
            <person name="Conn L."/>
            <person name="Conway A.B."/>
            <person name="Conway A.R."/>
            <person name="Creasy T.H."/>
            <person name="Dewar K."/>
            <person name="Dunn P."/>
            <person name="Etgu P."/>
            <person name="Feldblyum T.V."/>
            <person name="Feng J.-D."/>
            <person name="Fong B."/>
            <person name="Fujii C.Y."/>
            <person name="Gill J.E."/>
            <person name="Goldsmith A.D."/>
            <person name="Haas B."/>
            <person name="Hansen N.F."/>
            <person name="Hughes B."/>
            <person name="Huizar L."/>
            <person name="Hunter J.L."/>
            <person name="Jenkins J."/>
            <person name="Johnson-Hopson C."/>
            <person name="Khan S."/>
            <person name="Khaykin E."/>
            <person name="Kim C.J."/>
            <person name="Koo H.L."/>
            <person name="Kremenetskaia I."/>
            <person name="Kurtz D.B."/>
            <person name="Kwan A."/>
            <person name="Lam B."/>
            <person name="Langin-Hooper S."/>
            <person name="Lee A."/>
            <person name="Lee J.M."/>
            <person name="Lenz C.A."/>
            <person name="Li J.H."/>
            <person name="Li Y.-P."/>
            <person name="Lin X."/>
            <person name="Liu S.X."/>
            <person name="Liu Z.A."/>
            <person name="Luros J.S."/>
            <person name="Maiti R."/>
            <person name="Marziali A."/>
            <person name="Militscher J."/>
            <person name="Miranda M."/>
            <person name="Nguyen M."/>
            <person name="Nierman W.C."/>
            <person name="Osborne B.I."/>
            <person name="Pai G."/>
            <person name="Peterson J."/>
            <person name="Pham P.K."/>
            <person name="Rizzo M."/>
            <person name="Rooney T."/>
            <person name="Rowley D."/>
            <person name="Sakano H."/>
            <person name="Salzberg S.L."/>
            <person name="Schwartz J.R."/>
            <person name="Shinn P."/>
            <person name="Southwick A.M."/>
            <person name="Sun H."/>
            <person name="Tallon L.J."/>
            <person name="Tambunga G."/>
            <person name="Toriumi M.J."/>
            <person name="Town C.D."/>
            <person name="Utterback T."/>
            <person name="Van Aken S."/>
            <person name="Vaysberg M."/>
            <person name="Vysotskaia V.S."/>
            <person name="Walker M."/>
            <person name="Wu D."/>
            <person name="Yu G."/>
            <person name="Fraser C.M."/>
            <person name="Venter J.C."/>
            <person name="Davis R.W."/>
        </authorList>
    </citation>
    <scope>NUCLEOTIDE SEQUENCE [LARGE SCALE GENOMIC DNA]</scope>
    <source>
        <strain>cv. Columbia</strain>
    </source>
</reference>
<reference key="3">
    <citation type="journal article" date="2017" name="Plant J.">
        <title>Araport11: a complete reannotation of the Arabidopsis thaliana reference genome.</title>
        <authorList>
            <person name="Cheng C.Y."/>
            <person name="Krishnakumar V."/>
            <person name="Chan A.P."/>
            <person name="Thibaud-Nissen F."/>
            <person name="Schobel S."/>
            <person name="Town C.D."/>
        </authorList>
    </citation>
    <scope>GENOME REANNOTATION</scope>
    <source>
        <strain>cv. Columbia</strain>
    </source>
</reference>
<reference key="4">
    <citation type="submission" date="2006-07" db="EMBL/GenBank/DDBJ databases">
        <title>Large-scale analysis of RIKEN Arabidopsis full-length (RAFL) cDNAs.</title>
        <authorList>
            <person name="Totoki Y."/>
            <person name="Seki M."/>
            <person name="Ishida J."/>
            <person name="Nakajima M."/>
            <person name="Enju A."/>
            <person name="Kamiya A."/>
            <person name="Narusaka M."/>
            <person name="Shin-i T."/>
            <person name="Nakagawa M."/>
            <person name="Sakamoto N."/>
            <person name="Oishi K."/>
            <person name="Kohara Y."/>
            <person name="Kobayashi M."/>
            <person name="Toyoda A."/>
            <person name="Sakaki Y."/>
            <person name="Sakurai T."/>
            <person name="Iida K."/>
            <person name="Akiyama K."/>
            <person name="Satou M."/>
            <person name="Toyoda T."/>
            <person name="Konagaya A."/>
            <person name="Carninci P."/>
            <person name="Kawai J."/>
            <person name="Hayashizaki Y."/>
            <person name="Shinozaki K."/>
        </authorList>
    </citation>
    <scope>NUCLEOTIDE SEQUENCE [LARGE SCALE MRNA]</scope>
    <source>
        <strain>cv. Columbia</strain>
    </source>
</reference>
<reference key="5">
    <citation type="submission" date="2003-10" db="EMBL/GenBank/DDBJ databases">
        <title>Arabidopsis ORF clones.</title>
        <authorList>
            <person name="Cheuk R.F."/>
            <person name="Chen H."/>
            <person name="Kim C.J."/>
            <person name="Shinn P."/>
            <person name="Carninci P."/>
            <person name="Hayashizaki Y."/>
            <person name="Ishida J."/>
            <person name="Kamiya A."/>
            <person name="Kawai J."/>
            <person name="Narusaka M."/>
            <person name="Sakurai T."/>
            <person name="Satou M."/>
            <person name="Seki M."/>
            <person name="Shinozaki K."/>
            <person name="Ecker J.R."/>
        </authorList>
    </citation>
    <scope>NUCLEOTIDE SEQUENCE [LARGE SCALE MRNA]</scope>
    <source>
        <strain>cv. Columbia</strain>
    </source>
</reference>
<reference key="6">
    <citation type="journal article" date="2007" name="Biochem. Biophys. Res. Commun.">
        <title>Novel subsets of the Arabidopsis plasmalemma phosphoproteome identify phosphorylation sites in secondary active transporters.</title>
        <authorList>
            <person name="Hem S."/>
            <person name="Rofidal V."/>
            <person name="Sommerer N."/>
            <person name="Rossignol M."/>
        </authorList>
    </citation>
    <scope>PHOSPHORYLATION [LARGE SCALE ANALYSIS] AT SER-377</scope>
    <scope>IDENTIFICATION BY MASS SPECTROMETRY [LARGE SCALE ANALYSIS]</scope>
</reference>
<reference key="7">
    <citation type="journal article" date="2007" name="Mol. Cell. Proteomics">
        <title>Temporal analysis of sucrose-induced phosphorylation changes in plasma membrane proteins of Arabidopsis.</title>
        <authorList>
            <person name="Niittylae T."/>
            <person name="Fuglsang A.T."/>
            <person name="Palmgren M.G."/>
            <person name="Frommer W.B."/>
            <person name="Schulze W.X."/>
        </authorList>
    </citation>
    <scope>PHOSPHORYLATION [LARGE SCALE ANALYSIS] AT SER-377</scope>
    <scope>IDENTIFICATION BY MASS SPECTROMETRY [LARGE SCALE ANALYSIS]</scope>
    <source>
        <tissue>Seedling</tissue>
    </source>
</reference>
<reference key="8">
    <citation type="journal article" date="2009" name="Plant Physiol.">
        <title>Large-scale Arabidopsis phosphoproteome profiling reveals novel chloroplast kinase substrates and phosphorylation networks.</title>
        <authorList>
            <person name="Reiland S."/>
            <person name="Messerli G."/>
            <person name="Baerenfaller K."/>
            <person name="Gerrits B."/>
            <person name="Endler A."/>
            <person name="Grossmann J."/>
            <person name="Gruissem W."/>
            <person name="Baginsky S."/>
        </authorList>
    </citation>
    <scope>PHOSPHORYLATION [LARGE SCALE ANALYSIS] AT SER-377</scope>
    <scope>IDENTIFICATION BY MASS SPECTROMETRY [LARGE SCALE ANALYSIS]</scope>
</reference>
<comment type="interaction">
    <interactant intactId="EBI-16954301">
        <id>Q9C8M9</id>
    </interactant>
    <interactant intactId="EBI-1238687">
        <id>O04567</id>
        <label>At1g27190</label>
    </interactant>
    <organismsDiffer>false</organismsDiffer>
    <experiments>2</experiments>
</comment>
<comment type="interaction">
    <interactant intactId="EBI-16954301">
        <id>Q9C8M9</id>
    </interactant>
    <interactant intactId="EBI-20651225">
        <id>C0LGI5</id>
        <label>At1g69990</label>
    </interactant>
    <organismsDiffer>false</organismsDiffer>
    <experiments>3</experiments>
</comment>
<comment type="interaction">
    <interactant intactId="EBI-16954301">
        <id>Q9C8M9</id>
    </interactant>
    <interactant intactId="EBI-16902452">
        <id>Q8VYT3</id>
        <label>At4g30520</label>
    </interactant>
    <organismsDiffer>false</organismsDiffer>
    <experiments>2</experiments>
</comment>
<comment type="interaction">
    <interactant intactId="EBI-16954301">
        <id>Q9C8M9</id>
    </interactant>
    <interactant intactId="EBI-16964970">
        <id>C0LGU5</id>
        <label>At5g45780</label>
    </interactant>
    <organismsDiffer>false</organismsDiffer>
    <experiments>3</experiments>
</comment>
<comment type="interaction">
    <interactant intactId="EBI-16954301">
        <id>Q9C8M9</id>
    </interactant>
    <interactant intactId="EBI-6298290">
        <id>Q9ASS4</id>
        <label>At5g48380</label>
    </interactant>
    <organismsDiffer>false</organismsDiffer>
    <experiments>2</experiments>
</comment>
<comment type="interaction">
    <interactant intactId="EBI-16954301">
        <id>Q9C8M9</id>
    </interactant>
    <interactant intactId="EBI-617138">
        <id>Q94F62</id>
        <label>BAK1</label>
    </interactant>
    <organismsDiffer>false</organismsDiffer>
    <experiments>4</experiments>
</comment>
<comment type="interaction">
    <interactant intactId="EBI-16954301">
        <id>Q9C8M9</id>
    </interactant>
    <interactant intactId="EBI-590903">
        <id>Q9ZWC8</id>
        <label>BRL1</label>
    </interactant>
    <organismsDiffer>false</organismsDiffer>
    <experiments>2</experiments>
</comment>
<comment type="interaction">
    <interactant intactId="EBI-16954301">
        <id>Q9C8M9</id>
    </interactant>
    <interactant intactId="EBI-16914248">
        <id>C0LGW6</id>
        <label>ERL1</label>
    </interactant>
    <organismsDiffer>false</organismsDiffer>
    <experiments>2</experiments>
</comment>
<comment type="interaction">
    <interactant intactId="EBI-16954301">
        <id>Q9C8M9</id>
    </interactant>
    <interactant intactId="EBI-16895926">
        <id>Q6XAT2</id>
        <label>ERL2</label>
    </interactant>
    <organismsDiffer>false</organismsDiffer>
    <experiments>3</experiments>
</comment>
<comment type="interaction">
    <interactant intactId="EBI-16954301">
        <id>Q9C8M9</id>
    </interactant>
    <interactant intactId="EBI-20651739">
        <id>Q9ZVD4</id>
        <label>LRR-RLK</label>
    </interactant>
    <organismsDiffer>false</organismsDiffer>
    <experiments>2</experiments>
</comment>
<comment type="interaction">
    <interactant intactId="EBI-16954301">
        <id>Q9C8M9</id>
    </interactant>
    <interactant intactId="EBI-1238953">
        <id>Q9ZRF9</id>
        <label>RPK1</label>
    </interactant>
    <organismsDiffer>false</organismsDiffer>
    <experiments>2</experiments>
</comment>
<comment type="interaction">
    <interactant intactId="EBI-16954301">
        <id>Q9C8M9</id>
    </interactant>
    <interactant intactId="EBI-1555537">
        <id>Q94AG2</id>
        <label>SERK1</label>
    </interactant>
    <organismsDiffer>false</organismsDiffer>
    <experiments>3</experiments>
</comment>
<comment type="interaction">
    <interactant intactId="EBI-16954301">
        <id>Q9C8M9</id>
    </interactant>
    <interactant intactId="EBI-17072125">
        <id>Q8RWZ1</id>
        <label>SUB</label>
    </interactant>
    <organismsDiffer>false</organismsDiffer>
    <experiments>2</experiments>
</comment>
<comment type="subcellular location">
    <subcellularLocation>
        <location evidence="5">Membrane</location>
        <topology evidence="5">Single-pass membrane protein</topology>
    </subcellularLocation>
</comment>
<comment type="alternative products">
    <event type="alternative splicing"/>
    <isoform>
        <id>Q9C8M9-1</id>
        <name>1</name>
        <sequence type="displayed"/>
    </isoform>
    <text>A number of isoforms are produced. According to EST sequences.</text>
</comment>
<comment type="tissue specificity">
    <text evidence="4">Expressed in seedlings, roots, stems, leaves, flowers and siliques.</text>
</comment>
<comment type="domain">
    <text>The protein kinase domain is predicted to be catalytically inactive.</text>
</comment>
<comment type="disruption phenotype">
    <text evidence="4">No visible phenotype.</text>
</comment>
<comment type="miscellaneous">
    <text>Cannot functionally replace STRUBBELIG.</text>
</comment>
<comment type="miscellaneous">
    <text>Over-expression of SRF6 induces no obvious phenotypes.</text>
</comment>
<comment type="similarity">
    <text evidence="2">Belongs to the protein kinase superfamily. Ser/Thr protein kinase family.</text>
</comment>
<comment type="sequence caution" evidence="5">
    <conflict type="erroneous gene model prediction">
        <sequence resource="EMBL-CDS" id="AAG51973"/>
    </conflict>
</comment>
<accession>Q9C8M9</accession>
<accession>Q9C8M8</accession>
<gene>
    <name type="primary">SRF6</name>
    <name type="ordered locus">At1g53730</name>
    <name type="ORF">F22G10.3</name>
    <name type="ORF">F22G10.31</name>
</gene>
<protein>
    <recommendedName>
        <fullName>Protein STRUBBELIG-RECEPTOR FAMILY 6</fullName>
    </recommendedName>
    <alternativeName>
        <fullName>Leucine-rich repeat receptor kinase-like protein SRF6</fullName>
    </alternativeName>
</protein>
<feature type="signal peptide" evidence="1">
    <location>
        <begin position="1"/>
        <end position="29"/>
    </location>
</feature>
<feature type="chain" id="PRO_0000311846" description="Protein STRUBBELIG-RECEPTOR FAMILY 6">
    <location>
        <begin position="30"/>
        <end position="719"/>
    </location>
</feature>
<feature type="topological domain" description="Extracellular" evidence="1">
    <location>
        <begin position="30"/>
        <end position="293"/>
    </location>
</feature>
<feature type="transmembrane region" description="Helical" evidence="1">
    <location>
        <begin position="294"/>
        <end position="314"/>
    </location>
</feature>
<feature type="topological domain" description="Cytoplasmic" evidence="1">
    <location>
        <begin position="315"/>
        <end position="719"/>
    </location>
</feature>
<feature type="repeat" description="LRR 1">
    <location>
        <begin position="97"/>
        <end position="118"/>
    </location>
</feature>
<feature type="repeat" description="LRR 2">
    <location>
        <begin position="119"/>
        <end position="140"/>
    </location>
</feature>
<feature type="repeat" description="LRR 3">
    <location>
        <begin position="143"/>
        <end position="164"/>
    </location>
</feature>
<feature type="repeat" description="LRR 4">
    <location>
        <begin position="167"/>
        <end position="190"/>
    </location>
</feature>
<feature type="repeat" description="LRR 5">
    <location>
        <begin position="191"/>
        <end position="213"/>
    </location>
</feature>
<feature type="repeat" description="LRR 6">
    <location>
        <begin position="214"/>
        <end position="234"/>
    </location>
</feature>
<feature type="domain" description="Protein kinase" evidence="2">
    <location>
        <begin position="416"/>
        <end position="690"/>
    </location>
</feature>
<feature type="region of interest" description="Disordered" evidence="3">
    <location>
        <begin position="242"/>
        <end position="287"/>
    </location>
</feature>
<feature type="region of interest" description="Disordered" evidence="3">
    <location>
        <begin position="322"/>
        <end position="355"/>
    </location>
</feature>
<feature type="region of interest" description="Disordered" evidence="3">
    <location>
        <begin position="364"/>
        <end position="383"/>
    </location>
</feature>
<feature type="region of interest" description="Disordered" evidence="3">
    <location>
        <begin position="700"/>
        <end position="719"/>
    </location>
</feature>
<feature type="compositionally biased region" description="Pro residues" evidence="3">
    <location>
        <begin position="248"/>
        <end position="257"/>
    </location>
</feature>
<feature type="compositionally biased region" description="Basic and acidic residues" evidence="3">
    <location>
        <begin position="268"/>
        <end position="286"/>
    </location>
</feature>
<feature type="compositionally biased region" description="Polar residues" evidence="3">
    <location>
        <begin position="332"/>
        <end position="354"/>
    </location>
</feature>
<feature type="compositionally biased region" description="Polar residues" evidence="3">
    <location>
        <begin position="708"/>
        <end position="719"/>
    </location>
</feature>
<feature type="binding site" evidence="2">
    <location>
        <begin position="422"/>
        <end position="430"/>
    </location>
    <ligand>
        <name>ATP</name>
        <dbReference type="ChEBI" id="CHEBI:30616"/>
    </ligand>
</feature>
<feature type="binding site" evidence="2">
    <location>
        <position position="444"/>
    </location>
    <ligand>
        <name>ATP</name>
        <dbReference type="ChEBI" id="CHEBI:30616"/>
    </ligand>
</feature>
<feature type="modified residue" description="Phosphoserine" evidence="6 7 8">
    <location>
        <position position="377"/>
    </location>
</feature>
<proteinExistence type="evidence at protein level"/>
<dbReference type="EMBL" id="AY518291">
    <property type="protein sequence ID" value="AAR99874.1"/>
    <property type="molecule type" value="mRNA"/>
</dbReference>
<dbReference type="EMBL" id="AC024260">
    <property type="protein sequence ID" value="AAG51973.1"/>
    <property type="status" value="ALT_SEQ"/>
    <property type="molecule type" value="Genomic_DNA"/>
</dbReference>
<dbReference type="EMBL" id="AC024260">
    <property type="protein sequence ID" value="AAG51974.1"/>
    <property type="molecule type" value="Genomic_DNA"/>
</dbReference>
<dbReference type="EMBL" id="CP002684">
    <property type="protein sequence ID" value="AEE32990.1"/>
    <property type="molecule type" value="Genomic_DNA"/>
</dbReference>
<dbReference type="EMBL" id="AK227057">
    <property type="protein sequence ID" value="BAE99117.1"/>
    <property type="molecule type" value="mRNA"/>
</dbReference>
<dbReference type="EMBL" id="BT010600">
    <property type="protein sequence ID" value="AAQ89622.1"/>
    <property type="molecule type" value="mRNA"/>
</dbReference>
<dbReference type="PIR" id="F96577">
    <property type="entry name" value="F96577"/>
</dbReference>
<dbReference type="RefSeq" id="NP_175777.1">
    <molecule id="Q9C8M9-1"/>
    <property type="nucleotide sequence ID" value="NM_104251.4"/>
</dbReference>
<dbReference type="SMR" id="Q9C8M9"/>
<dbReference type="BioGRID" id="27036">
    <property type="interactions" value="34"/>
</dbReference>
<dbReference type="FunCoup" id="Q9C8M9">
    <property type="interactions" value="690"/>
</dbReference>
<dbReference type="IntAct" id="Q9C8M9">
    <property type="interactions" value="47"/>
</dbReference>
<dbReference type="STRING" id="3702.Q9C8M9"/>
<dbReference type="GlyGen" id="Q9C8M9">
    <property type="glycosylation" value="1 site"/>
</dbReference>
<dbReference type="iPTMnet" id="Q9C8M9"/>
<dbReference type="PaxDb" id="3702-AT1G53730.2"/>
<dbReference type="ProteomicsDB" id="226868">
    <molecule id="Q9C8M9-1"/>
</dbReference>
<dbReference type="EnsemblPlants" id="AT1G53730.1">
    <molecule id="Q9C8M9-1"/>
    <property type="protein sequence ID" value="AT1G53730.1"/>
    <property type="gene ID" value="AT1G53730"/>
</dbReference>
<dbReference type="GeneID" id="841811"/>
<dbReference type="Gramene" id="AT1G53730.1">
    <molecule id="Q9C8M9-1"/>
    <property type="protein sequence ID" value="AT1G53730.1"/>
    <property type="gene ID" value="AT1G53730"/>
</dbReference>
<dbReference type="KEGG" id="ath:AT1G53730"/>
<dbReference type="Araport" id="AT1G53730"/>
<dbReference type="TAIR" id="AT1G53730">
    <property type="gene designation" value="SRF6"/>
</dbReference>
<dbReference type="eggNOG" id="ENOG502QRHD">
    <property type="taxonomic scope" value="Eukaryota"/>
</dbReference>
<dbReference type="InParanoid" id="Q9C8M9"/>
<dbReference type="PhylomeDB" id="Q9C8M9"/>
<dbReference type="PRO" id="PR:Q9C8M9"/>
<dbReference type="Proteomes" id="UP000006548">
    <property type="component" value="Chromosome 1"/>
</dbReference>
<dbReference type="ExpressionAtlas" id="Q9C8M9">
    <property type="expression patterns" value="baseline and differential"/>
</dbReference>
<dbReference type="GO" id="GO:0016020">
    <property type="term" value="C:membrane"/>
    <property type="evidence" value="ECO:0007669"/>
    <property type="project" value="UniProtKB-SubCell"/>
</dbReference>
<dbReference type="GO" id="GO:0005524">
    <property type="term" value="F:ATP binding"/>
    <property type="evidence" value="ECO:0007669"/>
    <property type="project" value="UniProtKB-KW"/>
</dbReference>
<dbReference type="GO" id="GO:0004672">
    <property type="term" value="F:protein kinase activity"/>
    <property type="evidence" value="ECO:0007669"/>
    <property type="project" value="InterPro"/>
</dbReference>
<dbReference type="FunFam" id="3.80.10.10:FF:000062">
    <property type="entry name" value="protein STRUBBELIG-RECEPTOR FAMILY 3"/>
    <property type="match status" value="1"/>
</dbReference>
<dbReference type="FunFam" id="3.30.200.20:FF:000125">
    <property type="entry name" value="Protein STRUBBELIG-RECEPTOR FAMILY 8"/>
    <property type="match status" value="1"/>
</dbReference>
<dbReference type="FunFam" id="1.10.510.10:FF:000095">
    <property type="entry name" value="protein STRUBBELIG-RECEPTOR FAMILY 8"/>
    <property type="match status" value="1"/>
</dbReference>
<dbReference type="Gene3D" id="3.30.200.20">
    <property type="entry name" value="Phosphorylase Kinase, domain 1"/>
    <property type="match status" value="1"/>
</dbReference>
<dbReference type="Gene3D" id="3.80.10.10">
    <property type="entry name" value="Ribonuclease Inhibitor"/>
    <property type="match status" value="1"/>
</dbReference>
<dbReference type="Gene3D" id="1.10.510.10">
    <property type="entry name" value="Transferase(Phosphotransferase) domain 1"/>
    <property type="match status" value="1"/>
</dbReference>
<dbReference type="InterPro" id="IPR011009">
    <property type="entry name" value="Kinase-like_dom_sf"/>
</dbReference>
<dbReference type="InterPro" id="IPR001611">
    <property type="entry name" value="Leu-rich_rpt"/>
</dbReference>
<dbReference type="InterPro" id="IPR003591">
    <property type="entry name" value="Leu-rich_rpt_typical-subtyp"/>
</dbReference>
<dbReference type="InterPro" id="IPR032675">
    <property type="entry name" value="LRR_dom_sf"/>
</dbReference>
<dbReference type="InterPro" id="IPR013210">
    <property type="entry name" value="LRR_N_plant-typ"/>
</dbReference>
<dbReference type="InterPro" id="IPR046959">
    <property type="entry name" value="PRK1-6/SRF4-like"/>
</dbReference>
<dbReference type="InterPro" id="IPR000719">
    <property type="entry name" value="Prot_kinase_dom"/>
</dbReference>
<dbReference type="InterPro" id="IPR017441">
    <property type="entry name" value="Protein_kinase_ATP_BS"/>
</dbReference>
<dbReference type="InterPro" id="IPR001245">
    <property type="entry name" value="Ser-Thr/Tyr_kinase_cat_dom"/>
</dbReference>
<dbReference type="PANTHER" id="PTHR48007">
    <property type="entry name" value="LEUCINE-RICH REPEAT RECEPTOR-LIKE PROTEIN KINASE PXC1"/>
    <property type="match status" value="1"/>
</dbReference>
<dbReference type="PANTHER" id="PTHR48007:SF13">
    <property type="entry name" value="PROTEIN STRUBBELIG-RECEPTOR FAMILY 4"/>
    <property type="match status" value="1"/>
</dbReference>
<dbReference type="Pfam" id="PF00560">
    <property type="entry name" value="LRR_1"/>
    <property type="match status" value="1"/>
</dbReference>
<dbReference type="Pfam" id="PF13516">
    <property type="entry name" value="LRR_6"/>
    <property type="match status" value="1"/>
</dbReference>
<dbReference type="Pfam" id="PF13855">
    <property type="entry name" value="LRR_8"/>
    <property type="match status" value="1"/>
</dbReference>
<dbReference type="Pfam" id="PF08263">
    <property type="entry name" value="LRRNT_2"/>
    <property type="match status" value="1"/>
</dbReference>
<dbReference type="Pfam" id="PF07714">
    <property type="entry name" value="PK_Tyr_Ser-Thr"/>
    <property type="match status" value="1"/>
</dbReference>
<dbReference type="SMART" id="SM00369">
    <property type="entry name" value="LRR_TYP"/>
    <property type="match status" value="4"/>
</dbReference>
<dbReference type="SUPFAM" id="SSF52058">
    <property type="entry name" value="L domain-like"/>
    <property type="match status" value="1"/>
</dbReference>
<dbReference type="SUPFAM" id="SSF56112">
    <property type="entry name" value="Protein kinase-like (PK-like)"/>
    <property type="match status" value="1"/>
</dbReference>
<dbReference type="PROSITE" id="PS00107">
    <property type="entry name" value="PROTEIN_KINASE_ATP"/>
    <property type="match status" value="1"/>
</dbReference>
<dbReference type="PROSITE" id="PS50011">
    <property type="entry name" value="PROTEIN_KINASE_DOM"/>
    <property type="match status" value="1"/>
</dbReference>
<name>SRF6_ARATH</name>
<sequence length="719" mass="78085">MRENWAVVALFTLCIVGFELRFIHGATDASDTSALNTLFSGMHSPAQLTQWTAAAGDPCGQNWRGVTCSGSRVTQIKLSGLELSGTLGGYMLDKLTSLTELDLSSNNLGGDLPYQFPPNLQRLNLANNQFTGAASYSLSQITPLKYLNLGHNQFKGQIAIDFSKLDSLTTLDFSFNSFTNSLPATFSSLTSLKSLYLQNNQFSGTVDVLAGLPLETLNIANNDFTGWIPSSLKGITLIKDGNSFNTGPAPPPPPGTPPIRGSPSRKSGGRESRSSDESTRNGDSKKSGIGAGAIAGIIISLLVVTALLVAFFLFRRKKSKRSSPMDIEKTDNQPFTLASNDFHENNSIQSSSSVETKKLDTSLSINLRPPPIDRNKSFDDEDSTRKPIAVKKSTVVVPSNVRLYSVADLQIATGSFSVDNLLGEGTFGRVYRAEFDDGKVLAVKKIDSSALPHGMTDDFIEMVSKIANLDHPNVTKLVGYCAEHGQHLVVYEFHKNGSLHDFLHLSEEESKALVWNSRVKIALGTARALEYLHEVCSPSIVDKNIKSANILLDSELNPHLSDSGLASFLPTANELLNQTDEGYSAPEVSMSGQYSLKSDIYSFGVVMLELLTGRKPFDSTRSRSEQSLVRWATPQLHDIDALAKMVDPALKGLYPVKSLSRFADVIALCVQPEPEFRPPMSEVVQALVVLVQRANMSKRTVGVDPSQRAGSADTTSDYM</sequence>